<reference key="1">
    <citation type="submission" date="2008-05" db="EMBL/GenBank/DDBJ databases">
        <title>Complete sequence of chromosome 1 of Ralstonia pickettii 12J.</title>
        <authorList>
            <person name="Lucas S."/>
            <person name="Copeland A."/>
            <person name="Lapidus A."/>
            <person name="Glavina del Rio T."/>
            <person name="Dalin E."/>
            <person name="Tice H."/>
            <person name="Bruce D."/>
            <person name="Goodwin L."/>
            <person name="Pitluck S."/>
            <person name="Meincke L."/>
            <person name="Brettin T."/>
            <person name="Detter J.C."/>
            <person name="Han C."/>
            <person name="Kuske C.R."/>
            <person name="Schmutz J."/>
            <person name="Larimer F."/>
            <person name="Land M."/>
            <person name="Hauser L."/>
            <person name="Kyrpides N."/>
            <person name="Mikhailova N."/>
            <person name="Marsh T."/>
            <person name="Richardson P."/>
        </authorList>
    </citation>
    <scope>NUCLEOTIDE SEQUENCE [LARGE SCALE GENOMIC DNA]</scope>
    <source>
        <strain>12J</strain>
    </source>
</reference>
<comment type="function">
    <text evidence="1">Catalyzes the transfer of endogenously produced octanoic acid from octanoyl-acyl-carrier-protein onto the lipoyl domains of lipoate-dependent enzymes. Lipoyl-ACP can also act as a substrate although octanoyl-ACP is likely to be the physiological substrate.</text>
</comment>
<comment type="catalytic activity">
    <reaction evidence="1">
        <text>octanoyl-[ACP] + L-lysyl-[protein] = N(6)-octanoyl-L-lysyl-[protein] + holo-[ACP] + H(+)</text>
        <dbReference type="Rhea" id="RHEA:17665"/>
        <dbReference type="Rhea" id="RHEA-COMP:9636"/>
        <dbReference type="Rhea" id="RHEA-COMP:9685"/>
        <dbReference type="Rhea" id="RHEA-COMP:9752"/>
        <dbReference type="Rhea" id="RHEA-COMP:9928"/>
        <dbReference type="ChEBI" id="CHEBI:15378"/>
        <dbReference type="ChEBI" id="CHEBI:29969"/>
        <dbReference type="ChEBI" id="CHEBI:64479"/>
        <dbReference type="ChEBI" id="CHEBI:78463"/>
        <dbReference type="ChEBI" id="CHEBI:78809"/>
        <dbReference type="EC" id="2.3.1.181"/>
    </reaction>
</comment>
<comment type="pathway">
    <text evidence="1">Protein modification; protein lipoylation via endogenous pathway; protein N(6)-(lipoyl)lysine from octanoyl-[acyl-carrier-protein]: step 1/2.</text>
</comment>
<comment type="subcellular location">
    <subcellularLocation>
        <location evidence="1">Cytoplasm</location>
    </subcellularLocation>
</comment>
<comment type="miscellaneous">
    <text evidence="1">In the reaction, the free carboxyl group of octanoic acid is attached via an amide linkage to the epsilon-amino group of a specific lysine residue of lipoyl domains of lipoate-dependent enzymes.</text>
</comment>
<comment type="similarity">
    <text evidence="1">Belongs to the LipB family.</text>
</comment>
<evidence type="ECO:0000255" key="1">
    <source>
        <dbReference type="HAMAP-Rule" id="MF_00013"/>
    </source>
</evidence>
<evidence type="ECO:0000255" key="2">
    <source>
        <dbReference type="PROSITE-ProRule" id="PRU01067"/>
    </source>
</evidence>
<gene>
    <name evidence="1" type="primary">lipB</name>
    <name type="ordered locus">Rpic_0179</name>
</gene>
<proteinExistence type="inferred from homology"/>
<sequence length="229" mass="24251">MIPIDIVERGLQDYAACFDEMQTFTARRGPDTPDTIWLVEHPPVFTLGLAGDPAHLLAPGNIPLVKVDRGGQITYHGPGQVVAYLLLDLRRRGLFVKALVDAIEAAVIQTLATYNVASERKAGAPGIYLSSGPHAGAKIAALGLKIRNGCSYHGVSLNLAMDLSPFTQINPCGYAGLETVDMVTAGARDASGRAVDANDWQTVSRDLANALVAQLQQRAQAHPAEAATA</sequence>
<protein>
    <recommendedName>
        <fullName evidence="1">Octanoyltransferase</fullName>
        <ecNumber evidence="1">2.3.1.181</ecNumber>
    </recommendedName>
    <alternativeName>
        <fullName evidence="1">Lipoate-protein ligase B</fullName>
    </alternativeName>
    <alternativeName>
        <fullName evidence="1">Lipoyl/octanoyl transferase</fullName>
    </alternativeName>
    <alternativeName>
        <fullName evidence="1">Octanoyl-[acyl-carrier-protein]-protein N-octanoyltransferase</fullName>
    </alternativeName>
</protein>
<feature type="chain" id="PRO_1000089473" description="Octanoyltransferase">
    <location>
        <begin position="1"/>
        <end position="229"/>
    </location>
</feature>
<feature type="domain" description="BPL/LPL catalytic" evidence="2">
    <location>
        <begin position="30"/>
        <end position="223"/>
    </location>
</feature>
<feature type="active site" description="Acyl-thioester intermediate" evidence="1">
    <location>
        <position position="172"/>
    </location>
</feature>
<feature type="binding site" evidence="1">
    <location>
        <begin position="69"/>
        <end position="76"/>
    </location>
    <ligand>
        <name>substrate</name>
    </ligand>
</feature>
<feature type="binding site" evidence="1">
    <location>
        <begin position="141"/>
        <end position="143"/>
    </location>
    <ligand>
        <name>substrate</name>
    </ligand>
</feature>
<feature type="binding site" evidence="1">
    <location>
        <begin position="154"/>
        <end position="156"/>
    </location>
    <ligand>
        <name>substrate</name>
    </ligand>
</feature>
<feature type="site" description="Lowers pKa of active site Cys" evidence="1">
    <location>
        <position position="138"/>
    </location>
</feature>
<dbReference type="EC" id="2.3.1.181" evidence="1"/>
<dbReference type="EMBL" id="CP001068">
    <property type="protein sequence ID" value="ACD25342.1"/>
    <property type="molecule type" value="Genomic_DNA"/>
</dbReference>
<dbReference type="SMR" id="B2UE02"/>
<dbReference type="STRING" id="402626.Rpic_0179"/>
<dbReference type="KEGG" id="rpi:Rpic_0179"/>
<dbReference type="eggNOG" id="COG0321">
    <property type="taxonomic scope" value="Bacteria"/>
</dbReference>
<dbReference type="HOGENOM" id="CLU_035168_3_1_4"/>
<dbReference type="UniPathway" id="UPA00538">
    <property type="reaction ID" value="UER00592"/>
</dbReference>
<dbReference type="GO" id="GO:0005737">
    <property type="term" value="C:cytoplasm"/>
    <property type="evidence" value="ECO:0007669"/>
    <property type="project" value="UniProtKB-SubCell"/>
</dbReference>
<dbReference type="GO" id="GO:0033819">
    <property type="term" value="F:lipoyl(octanoyl) transferase activity"/>
    <property type="evidence" value="ECO:0007669"/>
    <property type="project" value="UniProtKB-EC"/>
</dbReference>
<dbReference type="GO" id="GO:0036211">
    <property type="term" value="P:protein modification process"/>
    <property type="evidence" value="ECO:0007669"/>
    <property type="project" value="InterPro"/>
</dbReference>
<dbReference type="CDD" id="cd16444">
    <property type="entry name" value="LipB"/>
    <property type="match status" value="1"/>
</dbReference>
<dbReference type="FunFam" id="3.30.930.10:FF:000020">
    <property type="entry name" value="Octanoyltransferase"/>
    <property type="match status" value="1"/>
</dbReference>
<dbReference type="Gene3D" id="3.30.930.10">
    <property type="entry name" value="Bira Bifunctional Protein, Domain 2"/>
    <property type="match status" value="1"/>
</dbReference>
<dbReference type="HAMAP" id="MF_00013">
    <property type="entry name" value="LipB"/>
    <property type="match status" value="1"/>
</dbReference>
<dbReference type="InterPro" id="IPR045864">
    <property type="entry name" value="aa-tRNA-synth_II/BPL/LPL"/>
</dbReference>
<dbReference type="InterPro" id="IPR004143">
    <property type="entry name" value="BPL_LPL_catalytic"/>
</dbReference>
<dbReference type="InterPro" id="IPR000544">
    <property type="entry name" value="Octanoyltransferase"/>
</dbReference>
<dbReference type="InterPro" id="IPR020605">
    <property type="entry name" value="Octanoyltransferase_CS"/>
</dbReference>
<dbReference type="NCBIfam" id="TIGR00214">
    <property type="entry name" value="lipB"/>
    <property type="match status" value="1"/>
</dbReference>
<dbReference type="NCBIfam" id="NF010922">
    <property type="entry name" value="PRK14342.1"/>
    <property type="match status" value="1"/>
</dbReference>
<dbReference type="NCBIfam" id="NF010923">
    <property type="entry name" value="PRK14343.1"/>
    <property type="match status" value="1"/>
</dbReference>
<dbReference type="PANTHER" id="PTHR10993:SF7">
    <property type="entry name" value="LIPOYLTRANSFERASE 2, MITOCHONDRIAL-RELATED"/>
    <property type="match status" value="1"/>
</dbReference>
<dbReference type="PANTHER" id="PTHR10993">
    <property type="entry name" value="OCTANOYLTRANSFERASE"/>
    <property type="match status" value="1"/>
</dbReference>
<dbReference type="Pfam" id="PF21948">
    <property type="entry name" value="LplA-B_cat"/>
    <property type="match status" value="1"/>
</dbReference>
<dbReference type="PIRSF" id="PIRSF016262">
    <property type="entry name" value="LPLase"/>
    <property type="match status" value="1"/>
</dbReference>
<dbReference type="SUPFAM" id="SSF55681">
    <property type="entry name" value="Class II aaRS and biotin synthetases"/>
    <property type="match status" value="1"/>
</dbReference>
<dbReference type="PROSITE" id="PS51733">
    <property type="entry name" value="BPL_LPL_CATALYTIC"/>
    <property type="match status" value="1"/>
</dbReference>
<dbReference type="PROSITE" id="PS01313">
    <property type="entry name" value="LIPB"/>
    <property type="match status" value="1"/>
</dbReference>
<accession>B2UE02</accession>
<name>LIPB_RALPJ</name>
<organism>
    <name type="scientific">Ralstonia pickettii (strain 12J)</name>
    <dbReference type="NCBI Taxonomy" id="402626"/>
    <lineage>
        <taxon>Bacteria</taxon>
        <taxon>Pseudomonadati</taxon>
        <taxon>Pseudomonadota</taxon>
        <taxon>Betaproteobacteria</taxon>
        <taxon>Burkholderiales</taxon>
        <taxon>Burkholderiaceae</taxon>
        <taxon>Ralstonia</taxon>
    </lineage>
</organism>
<keyword id="KW-0012">Acyltransferase</keyword>
<keyword id="KW-0963">Cytoplasm</keyword>
<keyword id="KW-0808">Transferase</keyword>